<reference key="1">
    <citation type="journal article" date="1994" name="Virology">
        <title>Genome structure and variability of a virus causing hantavirus pulmonary syndrome.</title>
        <authorList>
            <person name="Spiropoulou C.F."/>
            <person name="Morzunov S."/>
            <person name="Feldmann H."/>
            <person name="Sanchez A."/>
            <person name="Peters C.J."/>
            <person name="Nichol S.T."/>
        </authorList>
    </citation>
    <scope>NUCLEOTIDE SEQUENCE [GENOMIC RNA]</scope>
    <source>
        <strain evidence="21">NM H10</strain>
    </source>
</reference>
<reference key="2">
    <citation type="journal article" date="1995" name="J. Virol.">
        <title>Complete genetic characterization and analysis of isolation of Sin Nombre virus.</title>
        <authorList>
            <person name="Chizhikov V.E."/>
            <person name="Spiropoulou C.F."/>
            <person name="Morzunov S.P."/>
            <person name="Monroe M.C."/>
            <person name="Peters C.J."/>
            <person name="Nichol S.T."/>
        </authorList>
    </citation>
    <scope>NUCLEOTIDE SEQUENCE [GENOMIC RNA]</scope>
</reference>
<reference key="3">
    <citation type="journal article" date="2012" name="PLoS ONE">
        <title>Transmission ecology of sin nombre hantavirus in naturally infected north american deermouse populations in outdoor enclosures.</title>
        <authorList>
            <person name="Bagamian K.H."/>
            <person name="Towner J.S."/>
            <person name="Kuenzi A.J."/>
            <person name="Douglass R.J."/>
            <person name="Rollin P.E."/>
            <person name="Waller L.A."/>
            <person name="Mills J.N."/>
        </authorList>
    </citation>
    <scope>NUCLEOTIDE SEQUENCE [GENOMIC RNA]</scope>
    <source>
        <strain evidence="23">1</strain>
        <strain evidence="24">2</strain>
    </source>
</reference>
<reference key="4">
    <citation type="submission" date="2012-02" db="EMBL/GenBank/DDBJ databases">
        <title>Evolution of Sin Nombre hantavirus in Montana.</title>
        <authorList>
            <person name="Bagamian K.H."/>
        </authorList>
    </citation>
    <scope>NUCLEOTIDE SEQUENCE [GENOMIC RNA]</scope>
    <source>
        <strain evidence="22">1</strain>
    </source>
</reference>
<reference key="5">
    <citation type="journal article" date="2014" name="Proc. Natl. Acad. Sci. U.S.A.">
        <title>Pathophysiology of hantavirus pulmonary syndrome in rhesus macaques.</title>
        <authorList>
            <person name="Safronetz D."/>
            <person name="Prescott J."/>
            <person name="Feldmann F."/>
            <person name="Haddock E."/>
            <person name="Rosenke R."/>
            <person name="Okumura A."/>
            <person name="Brining D."/>
            <person name="Dahlstrom E."/>
            <person name="Porcella S.F."/>
            <person name="Ebihara H."/>
            <person name="Scott D.P."/>
            <person name="Hjelle B."/>
            <person name="Feldmann H."/>
        </authorList>
    </citation>
    <scope>NUCLEOTIDE SEQUENCE [GENOMIC RNA]</scope>
    <source>
        <strain evidence="25">77734</strain>
    </source>
</reference>
<reference key="6">
    <citation type="journal article" date="2002" name="J. Biol. Chem.">
        <title>Hantavirus nucleocapsid protein coiled-coil domains.</title>
        <authorList>
            <person name="Alfadhli A."/>
            <person name="Steel E."/>
            <person name="Finlay L."/>
            <person name="Baechinger H.P."/>
            <person name="Barklis E."/>
        </authorList>
    </citation>
    <scope>COILED COIL</scope>
</reference>
<reference key="7">
    <citation type="journal article" date="2004" name="J. Virol.">
        <title>Trimeric hantavirus nucleocapsid protein binds specifically to the viral RNA panhandle.</title>
        <authorList>
            <person name="Mir M.A."/>
            <person name="Panganiban A.T."/>
        </authorList>
    </citation>
    <scope>SUBUNIT</scope>
    <scope>RNA-BINDING</scope>
    <scope>FUNCTION</scope>
</reference>
<reference key="8">
    <citation type="journal article" date="2005" name="J. Virol.">
        <title>The hantavirus nucleocapsid protein recognizes specific features of the viral RNA panhandle and is altered in conformation upon RNA binding.</title>
        <authorList>
            <person name="Mir M.A."/>
            <person name="Panganiban A.T."/>
        </authorList>
    </citation>
    <scope>SUBUNIT</scope>
    <scope>RNA-BINDING</scope>
    <scope>FUNCTION</scope>
</reference>
<reference key="9">
    <citation type="journal article" date="2006" name="J. Virol.">
        <title>Characterization of the RNA chaperone activity of hantavirus nucleocapsid protein.</title>
        <authorList>
            <person name="Mir M.A."/>
            <person name="Panganiban A.T."/>
        </authorList>
    </citation>
    <scope>FUNCTION</scope>
</reference>
<reference key="10">
    <citation type="journal article" date="2006" name="J. Virol.">
        <title>Hantavirus N protein exhibits genus-specific recognition of the viral RNA panhandle.</title>
        <authorList>
            <person name="Mir M.A."/>
            <person name="Brown B."/>
            <person name="Hjelle B."/>
            <person name="Duran W.A."/>
            <person name="Panganiban A.T."/>
        </authorList>
    </citation>
    <scope>FUNCTION</scope>
    <scope>RNA-BINDING</scope>
</reference>
<reference key="11">
    <citation type="journal article" date="2008" name="Proc. Natl. Acad. Sci. U.S.A.">
        <title>Storage of cellular 5' mRNA caps in P bodies for viral cap-snatching.</title>
        <authorList>
            <person name="Mir M.A."/>
            <person name="Duran W.A."/>
            <person name="Hjelle B.L."/>
            <person name="Ye C."/>
            <person name="Panganiban A.T."/>
        </authorList>
    </citation>
    <scope>FUNCTION</scope>
</reference>
<reference key="12">
    <citation type="journal article" date="2008" name="EMBO J.">
        <title>A protein that replaces the entire cellular eIF4F complex.</title>
        <authorList>
            <person name="Mir M.A."/>
            <person name="Panganiban A.T."/>
        </authorList>
    </citation>
    <scope>FUNCTION</scope>
</reference>
<reference key="13">
    <citation type="journal article" date="2010" name="J. Virol.">
        <title>Interaction of hantavirus nucleocapsid protein with ribosomal protein S19.</title>
        <authorList>
            <person name="Haque A."/>
            <person name="Mir M.A."/>
        </authorList>
    </citation>
    <scope>INTERACTION WITH HOST RIBOSOMAL PROTEIN RPS19</scope>
    <scope>FUNCTION</scope>
</reference>
<reference key="14">
    <citation type="journal article" date="2010" name="J. Biol. Chem.">
        <title>Hantavirus nucleocapsid protein has distinct m7G cap- and RNA-binding sites.</title>
        <authorList>
            <person name="Mir M.A."/>
            <person name="Sheema S."/>
            <person name="Haseeb A."/>
            <person name="Haque A."/>
        </authorList>
    </citation>
    <scope>DOMAIN</scope>
    <scope>FUNCTION</scope>
    <source>
        <strain>77734</strain>
    </source>
</reference>
<reference key="15">
    <citation type="journal article" date="2010" name="RNA Biol.">
        <title>Identification of a region of hantavirus nucleocapsid protein required for RNA chaperone activity.</title>
        <authorList>
            <person name="Brown B.A."/>
            <person name="Panganiban A.T."/>
        </authorList>
    </citation>
    <scope>DOMAIN</scope>
    <scope>FUNCTION</scope>
    <scope>RNA-BINDING</scope>
</reference>
<reference key="16">
    <citation type="journal article" date="2014" name="J. Virol.">
        <title>Interaction between hantavirus nucleocapsid protein (N) and RNA-dependent RNA polymerase (RdRp) mutants reveals the requirement of an N-RdRp interaction for viral RNA synthesis.</title>
        <authorList>
            <person name="Cheng E."/>
            <person name="Wang Z."/>
            <person name="Mir M.A."/>
        </authorList>
    </citation>
    <scope>INTERACTION WITH VIRAL RDRP</scope>
</reference>
<reference key="17">
    <citation type="journal article" date="2014" name="Biochem. J.">
        <title>Ribosomal protein S19-binding domain provides insights into hantavirus nucleocapsid protein-mediated translation initiation mechanism.</title>
        <authorList>
            <person name="Ganaie S.S."/>
            <person name="Haque A."/>
            <person name="Cheng E."/>
            <person name="Bonny T.S."/>
            <person name="Salim N.N."/>
            <person name="Mir M.A."/>
        </authorList>
    </citation>
    <scope>FUNCTION</scope>
    <scope>INTERACTION WITH HOST RIBOSOMAL PROTEIN RPS19</scope>
    <scope>SUBUNIT</scope>
</reference>
<reference key="18">
    <citation type="journal article" date="2016" name="Virology">
        <title>Sin Nombre hantavirus nucleocapsid protein exhibits a metal-dependent DNA-specific endonucleolytic activity.</title>
        <authorList>
            <person name="Moencke-Buchner E."/>
            <person name="Szczepek M."/>
            <person name="Bokelmann M."/>
            <person name="Heinemann P."/>
            <person name="Raftery M.J."/>
            <person name="Krueger D.H."/>
            <person name="Reuter M."/>
        </authorList>
    </citation>
    <scope>FUNCTION</scope>
    <scope>CATALYTIC ACTIVITY</scope>
    <scope>MUTAGENESIS OF ASP-88 AND ASP-103</scope>
    <scope>COFACTOR</scope>
</reference>
<reference evidence="26 27" key="19">
    <citation type="journal article" date="2007" name="J. Mol. Biol.">
        <title>The coiled-coil domain structure of the Sin Nombre virus nucleocapsid protein.</title>
        <authorList>
            <person name="Boudko S.P."/>
            <person name="Kuhn R.J."/>
            <person name="Rossmann M.G."/>
        </authorList>
    </citation>
    <scope>X-RAY CRYSTALLOGRAPHY (1.15 ANGSTROMS) OF 1-75</scope>
    <scope>DOMAIN</scope>
    <scope>COILED COIL</scope>
</reference>
<reference evidence="28 29" key="20">
    <citation type="journal article" date="2016" name="J. Virol.">
        <title>Crystal Structure of the Core Region of Hantavirus Nucleocapsid Protein Reveals the Mechanism for Ribonucleoprotein Complex Formation.</title>
        <authorList>
            <person name="Guo Y."/>
            <person name="Wang W."/>
            <person name="Sun Y."/>
            <person name="Ma C."/>
            <person name="Wang X."/>
            <person name="Wang X."/>
            <person name="Liu P."/>
            <person name="Shen S."/>
            <person name="Li B."/>
            <person name="Lin J."/>
            <person name="Deng F."/>
            <person name="Wang H."/>
            <person name="Lou Z."/>
        </authorList>
    </citation>
    <scope>X-RAY CRYSTALLOGRAPHY (2.30 ANGSTROMS) OF 114-397</scope>
    <scope>SUBUNIT</scope>
    <scope>MUTAGENESIS OF LEU-102; VAL-104; ILE-107; LEU-405; LEU-408; LEU-412 AND ILE-415</scope>
</reference>
<dbReference type="EC" id="3.1.-.-" evidence="19"/>
<dbReference type="EMBL" id="L25784">
    <property type="protein sequence ID" value="AAA75529.1"/>
    <property type="molecule type" value="Viral_cRNA"/>
</dbReference>
<dbReference type="EMBL" id="L37904">
    <property type="protein sequence ID" value="AAC42203.1"/>
    <property type="molecule type" value="Genomic_RNA"/>
</dbReference>
<dbReference type="EMBL" id="JQ690281">
    <property type="protein sequence ID" value="AFV71284.1"/>
    <property type="molecule type" value="Viral_cRNA"/>
</dbReference>
<dbReference type="EMBL" id="JQ690276">
    <property type="protein sequence ID" value="AFV71286.1"/>
    <property type="molecule type" value="Viral_cRNA"/>
</dbReference>
<dbReference type="EMBL" id="JQ690277">
    <property type="protein sequence ID" value="AFV71287.1"/>
    <property type="molecule type" value="Viral_cRNA"/>
</dbReference>
<dbReference type="EMBL" id="KF537003">
    <property type="protein sequence ID" value="AIA08877.1"/>
    <property type="molecule type" value="Viral_cRNA"/>
</dbReference>
<dbReference type="EMBL" id="KF537006">
    <property type="protein sequence ID" value="AIA08880.1"/>
    <property type="molecule type" value="Viral_cRNA"/>
</dbReference>
<dbReference type="RefSeq" id="NP_941975.1">
    <property type="nucleotide sequence ID" value="NC_005216.1"/>
</dbReference>
<dbReference type="PDB" id="2IC6">
    <property type="method" value="X-ray"/>
    <property type="resolution" value="1.15 A"/>
    <property type="chains" value="A/B=1-75"/>
</dbReference>
<dbReference type="PDB" id="2IC9">
    <property type="method" value="X-ray"/>
    <property type="resolution" value="2.00 A"/>
    <property type="chains" value="A/B=1-93"/>
</dbReference>
<dbReference type="PDB" id="5E05">
    <property type="method" value="X-ray"/>
    <property type="resolution" value="2.30 A"/>
    <property type="chains" value="A=114-397"/>
</dbReference>
<dbReference type="PDB" id="5E06">
    <property type="method" value="X-ray"/>
    <property type="resolution" value="3.00 A"/>
    <property type="chains" value="A=114-397"/>
</dbReference>
<dbReference type="PDBsum" id="2IC6"/>
<dbReference type="PDBsum" id="2IC9"/>
<dbReference type="PDBsum" id="5E05"/>
<dbReference type="PDBsum" id="5E06"/>
<dbReference type="SMR" id="Q89462"/>
<dbReference type="KEGG" id="vg:2943142"/>
<dbReference type="OrthoDB" id="2640at10239"/>
<dbReference type="EvolutionaryTrace" id="Q89462"/>
<dbReference type="Proteomes" id="UP000113911">
    <property type="component" value="Genome"/>
</dbReference>
<dbReference type="Proteomes" id="UP000167429">
    <property type="component" value="Genome"/>
</dbReference>
<dbReference type="Proteomes" id="UP000204632">
    <property type="component" value="Genome"/>
</dbReference>
<dbReference type="GO" id="GO:0044177">
    <property type="term" value="C:host cell Golgi apparatus"/>
    <property type="evidence" value="ECO:0007669"/>
    <property type="project" value="UniProtKB-SubCell"/>
</dbReference>
<dbReference type="GO" id="GO:0044220">
    <property type="term" value="C:host cell perinuclear region of cytoplasm"/>
    <property type="evidence" value="ECO:0007669"/>
    <property type="project" value="UniProtKB-SubCell"/>
</dbReference>
<dbReference type="GO" id="GO:1990904">
    <property type="term" value="C:ribonucleoprotein complex"/>
    <property type="evidence" value="ECO:0007669"/>
    <property type="project" value="UniProtKB-KW"/>
</dbReference>
<dbReference type="GO" id="GO:0019013">
    <property type="term" value="C:viral nucleocapsid"/>
    <property type="evidence" value="ECO:0007669"/>
    <property type="project" value="UniProtKB-KW"/>
</dbReference>
<dbReference type="GO" id="GO:0004519">
    <property type="term" value="F:endonuclease activity"/>
    <property type="evidence" value="ECO:0007669"/>
    <property type="project" value="UniProtKB-KW"/>
</dbReference>
<dbReference type="GO" id="GO:0003723">
    <property type="term" value="F:RNA binding"/>
    <property type="evidence" value="ECO:0007669"/>
    <property type="project" value="UniProtKB-KW"/>
</dbReference>
<dbReference type="GO" id="GO:0006417">
    <property type="term" value="P:regulation of translation"/>
    <property type="evidence" value="ECO:0007669"/>
    <property type="project" value="UniProtKB-KW"/>
</dbReference>
<dbReference type="Gene3D" id="1.20.58.90">
    <property type="match status" value="1"/>
</dbReference>
<dbReference type="InterPro" id="IPR002214">
    <property type="entry name" value="Hanta_nucleocap"/>
</dbReference>
<dbReference type="Pfam" id="PF00846">
    <property type="entry name" value="Hanta_nucleocap"/>
    <property type="match status" value="1"/>
</dbReference>
<dbReference type="PIRSF" id="PIRSF003949">
    <property type="entry name" value="N_HantaV"/>
    <property type="match status" value="1"/>
</dbReference>
<sequence length="428" mass="48177">MSTLKEVQDNITLHEQQLVTARQKLKDAERAVELDPDDVNKSTLQSRRAAVSALETKLGELKRELADLIAAQKLASKPVDPTGIEPDDHLKEKSSLRYGNVLDVNSIDLEEPSGQTADWKSIGLYILSFALPIILKALYMLSTRGRQTIKENKGTRIRFKDDSSYEEVNGIRKPRHLYVSMPTAQSTMKADEITPGRFRTIACGLFPAQVKARNIISPVMGVIGFSFFVKDWMERIDDFLAARCPFLPEQKDPRDAALATNRAYFITRQLQVDESKVSDIEDLIADARAESATIFADIATPHSVWVFACAPDRCPPTALYVAGMPELGAFFAILQDMRNTIMASKSVGTSEEKLKKKSAFYQSYLRRTQSMGIQLDQKIIILYMSHWGREAVNHFHLGDDMDPELRELAQTLVDIKVREISNQEPLKL</sequence>
<organism>
    <name type="scientific">Sin Nombre orthohantavirus</name>
    <name type="common">SNV</name>
    <name type="synonym">Sin Nombre virus</name>
    <dbReference type="NCBI Taxonomy" id="3052499"/>
    <lineage>
        <taxon>Viruses</taxon>
        <taxon>Riboviria</taxon>
        <taxon>Orthornavirae</taxon>
        <taxon>Negarnaviricota</taxon>
        <taxon>Polyploviricotina</taxon>
        <taxon>Ellioviricetes</taxon>
        <taxon>Bunyavirales</taxon>
        <taxon>Hantaviridae</taxon>
        <taxon>Mammantavirinae</taxon>
        <taxon>Orthohantavirus</taxon>
    </lineage>
</organism>
<feature type="chain" id="PRO_0000455187" description="Nucleoprotein">
    <location>
        <begin position="1"/>
        <end position="428"/>
    </location>
</feature>
<feature type="region of interest" description="Viral panhandle binding" evidence="15">
    <location>
        <begin position="1"/>
        <end position="175"/>
    </location>
</feature>
<feature type="region of interest" description="Chaperone activity" evidence="15">
    <location>
        <begin position="1"/>
        <end position="100"/>
    </location>
</feature>
<feature type="region of interest" description="Homomultimerization" evidence="4">
    <location>
        <begin position="1"/>
        <end position="79"/>
    </location>
</feature>
<feature type="region of interest" description="RdRP binding" evidence="16">
    <location>
        <begin position="1"/>
        <end position="50"/>
    </location>
</feature>
<feature type="region of interest" description="Interaction with glycoprotein N" evidence="4">
    <location>
        <begin position="80"/>
        <end position="248"/>
    </location>
</feature>
<feature type="region of interest" description="Homomultimerization" evidence="2">
    <location>
        <begin position="100"/>
        <end position="125"/>
    </location>
</feature>
<feature type="region of interest" description="Interaction with host RPS19" evidence="17">
    <location>
        <begin position="150"/>
        <end position="175"/>
    </location>
</feature>
<feature type="region of interest" description="Viral RNA-binding" evidence="2">
    <location>
        <begin position="175"/>
        <end position="217"/>
    </location>
</feature>
<feature type="region of interest" description="Interaction with host UBE2I/UBC9" evidence="2">
    <location>
        <begin position="188"/>
        <end position="191"/>
    </location>
</feature>
<feature type="region of interest" description="Interaction with host DAXX" evidence="3">
    <location>
        <begin position="372"/>
        <end position="428"/>
    </location>
</feature>
<feature type="region of interest" description="Homomultimerization" evidence="4">
    <location>
        <begin position="372"/>
        <end position="420"/>
    </location>
</feature>
<feature type="coiled-coil region" evidence="5 10">
    <location>
        <begin position="4"/>
        <end position="71"/>
    </location>
</feature>
<feature type="short sequence motif" description="YxxL" evidence="2">
    <location>
        <begin position="178"/>
        <end position="181"/>
    </location>
</feature>
<feature type="site" description="Important for the endonuclease activity" evidence="19">
    <location>
        <position position="88"/>
    </location>
</feature>
<feature type="site" description="Important for the endonuclease activity" evidence="19">
    <location>
        <position position="103"/>
    </location>
</feature>
<feature type="mutagenesis site" description="Complete loss of endonuclease activity; when associated with A-103." evidence="19">
    <original>D</original>
    <variation>A</variation>
    <location>
        <position position="88"/>
    </location>
</feature>
<feature type="mutagenesis site" description="Loss of homomultimerization." evidence="18">
    <original>L</original>
    <variation>A</variation>
    <location>
        <position position="102"/>
    </location>
</feature>
<feature type="mutagenesis site" description="Complete loss of endonuclease activity; when associated with A-88." evidence="19">
    <original>D</original>
    <variation>A</variation>
    <location>
        <position position="103"/>
    </location>
</feature>
<feature type="mutagenesis site" description="Loss of homomultimerization." evidence="18">
    <original>V</original>
    <variation>A</variation>
    <location>
        <position position="104"/>
    </location>
</feature>
<feature type="mutagenesis site" description="Loss of homomultimerization." evidence="18">
    <original>I</original>
    <variation>A</variation>
    <location>
        <position position="107"/>
    </location>
</feature>
<feature type="mutagenesis site" description="Loss of homomultimerization." evidence="18">
    <original>L</original>
    <variation>A</variation>
    <location>
        <position position="405"/>
    </location>
</feature>
<feature type="mutagenesis site" description="Loss of homomultimerization." evidence="18">
    <original>L</original>
    <variation>A</variation>
    <location>
        <position position="408"/>
    </location>
</feature>
<feature type="mutagenesis site" description="Loss of homomultimerization." evidence="18">
    <original>L</original>
    <variation>A</variation>
    <location>
        <position position="412"/>
    </location>
</feature>
<feature type="mutagenesis site" description="Loss of homomultimerization." evidence="18">
    <original>I</original>
    <variation>A</variation>
    <location>
        <position position="415"/>
    </location>
</feature>
<feature type="helix" evidence="30">
    <location>
        <begin position="3"/>
        <end position="34"/>
    </location>
</feature>
<feature type="helix" evidence="30">
    <location>
        <begin position="38"/>
        <end position="71"/>
    </location>
</feature>
<feature type="helix" evidence="31">
    <location>
        <begin position="119"/>
        <end position="127"/>
    </location>
</feature>
<feature type="helix" evidence="31">
    <location>
        <begin position="131"/>
        <end position="143"/>
    </location>
</feature>
<feature type="helix" evidence="31">
    <location>
        <begin position="145"/>
        <end position="149"/>
    </location>
</feature>
<feature type="strand" evidence="31">
    <location>
        <begin position="154"/>
        <end position="159"/>
    </location>
</feature>
<feature type="strand" evidence="31">
    <location>
        <begin position="165"/>
        <end position="168"/>
    </location>
</feature>
<feature type="strand" evidence="31">
    <location>
        <begin position="171"/>
        <end position="174"/>
    </location>
</feature>
<feature type="strand" evidence="31">
    <location>
        <begin position="177"/>
        <end position="180"/>
    </location>
</feature>
<feature type="strand" evidence="31">
    <location>
        <begin position="185"/>
        <end position="187"/>
    </location>
</feature>
<feature type="helix" evidence="31">
    <location>
        <begin position="195"/>
        <end position="205"/>
    </location>
</feature>
<feature type="helix" evidence="31">
    <location>
        <begin position="207"/>
        <end position="212"/>
    </location>
</feature>
<feature type="helix" evidence="31">
    <location>
        <begin position="218"/>
        <end position="221"/>
    </location>
</feature>
<feature type="turn" evidence="31">
    <location>
        <begin position="222"/>
        <end position="224"/>
    </location>
</feature>
<feature type="helix" evidence="31">
    <location>
        <begin position="225"/>
        <end position="229"/>
    </location>
</feature>
<feature type="helix" evidence="31">
    <location>
        <begin position="232"/>
        <end position="241"/>
    </location>
</feature>
<feature type="helix" evidence="31">
    <location>
        <begin position="253"/>
        <end position="259"/>
    </location>
</feature>
<feature type="helix" evidence="31">
    <location>
        <begin position="261"/>
        <end position="272"/>
    </location>
</feature>
<feature type="helix" evidence="32">
    <location>
        <begin position="273"/>
        <end position="275"/>
    </location>
</feature>
<feature type="helix" evidence="31">
    <location>
        <begin position="278"/>
        <end position="288"/>
    </location>
</feature>
<feature type="turn" evidence="31">
    <location>
        <begin position="289"/>
        <end position="291"/>
    </location>
</feature>
<feature type="strand" evidence="31">
    <location>
        <begin position="298"/>
        <end position="300"/>
    </location>
</feature>
<feature type="helix" evidence="31">
    <location>
        <begin position="304"/>
        <end position="307"/>
    </location>
</feature>
<feature type="helix" evidence="31">
    <location>
        <begin position="316"/>
        <end position="318"/>
    </location>
</feature>
<feature type="helix" evidence="31">
    <location>
        <begin position="324"/>
        <end position="341"/>
    </location>
</feature>
<feature type="helix" evidence="31">
    <location>
        <begin position="360"/>
        <end position="369"/>
    </location>
</feature>
<feature type="helix" evidence="31">
    <location>
        <begin position="377"/>
        <end position="392"/>
    </location>
</feature>
<evidence type="ECO:0000250" key="1">
    <source>
        <dbReference type="UniProtKB" id="O36307"/>
    </source>
</evidence>
<evidence type="ECO:0000250" key="2">
    <source>
        <dbReference type="UniProtKB" id="P05133"/>
    </source>
</evidence>
<evidence type="ECO:0000250" key="3">
    <source>
        <dbReference type="UniProtKB" id="P27313"/>
    </source>
</evidence>
<evidence type="ECO:0000250" key="4">
    <source>
        <dbReference type="UniProtKB" id="Q88918"/>
    </source>
</evidence>
<evidence type="ECO:0000269" key="5">
    <source>
    </source>
</evidence>
<evidence type="ECO:0000269" key="6">
    <source>
    </source>
</evidence>
<evidence type="ECO:0000269" key="7">
    <source>
    </source>
</evidence>
<evidence type="ECO:0000269" key="8">
    <source>
    </source>
</evidence>
<evidence type="ECO:0000269" key="9">
    <source>
    </source>
</evidence>
<evidence type="ECO:0000269" key="10">
    <source>
    </source>
</evidence>
<evidence type="ECO:0000269" key="11">
    <source>
    </source>
</evidence>
<evidence type="ECO:0000269" key="12">
    <source>
    </source>
</evidence>
<evidence type="ECO:0000269" key="13">
    <source>
    </source>
</evidence>
<evidence type="ECO:0000269" key="14">
    <source>
    </source>
</evidence>
<evidence type="ECO:0000269" key="15">
    <source>
    </source>
</evidence>
<evidence type="ECO:0000269" key="16">
    <source>
    </source>
</evidence>
<evidence type="ECO:0000269" key="17">
    <source>
    </source>
</evidence>
<evidence type="ECO:0000269" key="18">
    <source>
    </source>
</evidence>
<evidence type="ECO:0000269" key="19">
    <source>
    </source>
</evidence>
<evidence type="ECO:0000305" key="20"/>
<evidence type="ECO:0000312" key="21">
    <source>
        <dbReference type="EMBL" id="AAA75529.1"/>
    </source>
</evidence>
<evidence type="ECO:0000312" key="22">
    <source>
        <dbReference type="EMBL" id="AFV71284.1"/>
    </source>
</evidence>
<evidence type="ECO:0000312" key="23">
    <source>
        <dbReference type="EMBL" id="AFV71286.1"/>
    </source>
</evidence>
<evidence type="ECO:0000312" key="24">
    <source>
        <dbReference type="EMBL" id="AFV71287.1"/>
    </source>
</evidence>
<evidence type="ECO:0000312" key="25">
    <source>
        <dbReference type="EMBL" id="AIA08877.1"/>
    </source>
</evidence>
<evidence type="ECO:0007744" key="26">
    <source>
        <dbReference type="PDB" id="2IC6"/>
    </source>
</evidence>
<evidence type="ECO:0007744" key="27">
    <source>
        <dbReference type="PDB" id="2IC9"/>
    </source>
</evidence>
<evidence type="ECO:0007744" key="28">
    <source>
        <dbReference type="PDB" id="5E05"/>
    </source>
</evidence>
<evidence type="ECO:0007744" key="29">
    <source>
        <dbReference type="PDB" id="5E06"/>
    </source>
</evidence>
<evidence type="ECO:0007829" key="30">
    <source>
        <dbReference type="PDB" id="2IC6"/>
    </source>
</evidence>
<evidence type="ECO:0007829" key="31">
    <source>
        <dbReference type="PDB" id="5E05"/>
    </source>
</evidence>
<evidence type="ECO:0007829" key="32">
    <source>
        <dbReference type="PDB" id="5E06"/>
    </source>
</evidence>
<proteinExistence type="evidence at protein level"/>
<gene>
    <name type="primary">N</name>
</gene>
<comment type="function">
    <text evidence="1 2 6 7 8 9 11 12 13 14 15 17 19 20">Encapsidates the genome protecting it from nucleases (Probable). The encapsidated genomic RNA is termed the nucleocapsid (NC) and serves as template for transcription and replication (Probable). The nucleocapsid has a left-handed helical structure (By similarity). As a trimer, specifically binds and acts as a chaperone to unwind the panhandle structure formed by the viral RNA (vRNA) termini (PubMed:15254200, PubMed:15650206, PubMed:16775315, PubMed:16971445, PubMed:21378500, PubMed:25062117). Involved in the transcription and replication initiation of vRNA by mediating primer annealing (PubMed:20164193). Plays a role in cap snatching by sequestering capped RNAs in P bodies for use by the viral RdRp during transcription initiation (PubMed:19047634). Substitutes for the cellular cap-binding complex (eIF4F) to preferentially facilitate the translation of capped mRNAs (PubMed:18971945, PubMed:25062117). Initiates the translation by specifically binding to the cap and 40S ribosomal subunit (PubMed:20164193, PubMed:20844026, PubMed:25062117). Prevents the viral glycoprotein N (Gn) from autophagy-dependent breakdown maybe by blocking autophagosome formation (By similarity). Inhibits host EIF2AK2/PKR dimerization to prevent PKR-induced translational shutdown in cells and thus the activation of the antiviral state (By similarity). Also displays sequence-unspecific DNA endonuclease activity (PubMed:27261891).</text>
</comment>
<comment type="cofactor">
    <cofactor evidence="19">
        <name>Mg(2+)</name>
        <dbReference type="ChEBI" id="CHEBI:18420"/>
    </cofactor>
    <cofactor evidence="19">
        <name>Mn(2+)</name>
        <dbReference type="ChEBI" id="CHEBI:29035"/>
    </cofactor>
</comment>
<comment type="subunit">
    <text evidence="2 3 4 6 7 14 16 17 18">Homotrimer (PubMed:15254200, PubMed:15650206, PubMed:25062117). Homomultimer (PubMed:26559827). Homomultimerizes and binds to viral genomic RNA to form the nucleocapsid (By similarity) (PubMed:26559827). Interacts with host MAP1LC3B; this interaction participates to the protection of Gn from virus-triggered autophagy. Interacts with host SNAP29; this interaction participates to the protection of glycoprotein N from virus-triggered autophagy (By similarity). Interacts (via N-terminus) with host RPS19; this interaction probably mediates the loading of the 40S ribosomal subunit on viral capped mRNA during N-mediated translation initiation (PubMed:20844026, PubMed:25062117). Interacts with the viral RdRp; this interaction is required for RdRp function (PubMed:24850733). Interacts with host SUMO1 (via N-terminus) (By similarity). Interacts with host DAXX (By similarity). Interacts with the viral glycoprotein N (via C-terminus) (By similarity). Interacts with the viral glycoprotein C (via C-terminus) (By similarity).</text>
</comment>
<comment type="subcellular location">
    <subcellularLocation>
        <location evidence="2">Virion</location>
    </subcellularLocation>
    <subcellularLocation>
        <location evidence="2">Host cytoplasm</location>
        <location evidence="2">Host perinuclear region</location>
    </subcellularLocation>
    <subcellularLocation>
        <location evidence="2">Host Golgi apparatus</location>
        <location evidence="2">Host cis-Golgi network</location>
    </subcellularLocation>
    <text evidence="2">Internal protein of virus particle.</text>
</comment>
<comment type="domain">
    <text evidence="2 10 13 15">The N-terminus is required for chaperone activity and, in trimeric form, this region likely serves in high affinity vRNA panhandle recognition (PubMed:21378500). The N-terminus also contains a coiled coil region, which probably participates in but is insufficient to initiate N trimerization (PubMed:17222867). The YxxL motif is indispensable for the interaction with host MAP1LC3B (By similarity). The central region is involved in specific RNA-binding (By similarity). Has distinct cap- and RNA-binding sites so it can bind simultaneously both the vRNA and mRNA cap (PubMed:20164193).</text>
</comment>
<comment type="similarity">
    <text evidence="20">Belongs to the hantavirus nucleocapsid protein family.</text>
</comment>
<name>NCAP_SINV</name>
<keyword id="KW-0002">3D-structure</keyword>
<keyword id="KW-0143">Chaperone</keyword>
<keyword id="KW-0175">Coiled coil</keyword>
<keyword id="KW-0255">Endonuclease</keyword>
<keyword id="KW-1035">Host cytoplasm</keyword>
<keyword id="KW-1040">Host Golgi apparatus</keyword>
<keyword id="KW-0378">Hydrolase</keyword>
<keyword id="KW-0540">Nuclease</keyword>
<keyword id="KW-0687">Ribonucleoprotein</keyword>
<keyword id="KW-0694">RNA-binding</keyword>
<keyword id="KW-0804">Transcription</keyword>
<keyword id="KW-0805">Transcription regulation</keyword>
<keyword id="KW-0810">Translation regulation</keyword>
<keyword id="KW-0543">Viral nucleoprotein</keyword>
<keyword id="KW-0946">Virion</keyword>
<protein>
    <recommendedName>
        <fullName>Nucleoprotein</fullName>
        <ecNumber evidence="19">3.1.-.-</ecNumber>
    </recommendedName>
    <alternativeName>
        <fullName>Nucleocapsid protein</fullName>
        <shortName>Protein N</shortName>
    </alternativeName>
</protein>
<organismHost>
    <name type="scientific">Homo sapiens</name>
    <name type="common">Human</name>
    <dbReference type="NCBI Taxonomy" id="9606"/>
</organismHost>
<organismHost>
    <name type="scientific">Peromyscus maniculatus</name>
    <name type="common">North American deer mouse</name>
    <dbReference type="NCBI Taxonomy" id="10042"/>
</organismHost>
<accession>Q89462</accession>